<feature type="chain" id="PRO_0000324775" description="Receptor-mediated endocytosis protein 6">
    <location>
        <begin position="1"/>
        <end position="1093"/>
    </location>
</feature>
<feature type="domain" description="Ras-GAP" evidence="1">
    <location>
        <begin position="156"/>
        <end position="389"/>
    </location>
</feature>
<feature type="domain" description="VPS9" evidence="2">
    <location>
        <begin position="955"/>
        <end position="1093"/>
    </location>
</feature>
<feature type="region of interest" description="Disordered" evidence="3">
    <location>
        <begin position="547"/>
        <end position="610"/>
    </location>
</feature>
<feature type="region of interest" description="Disordered" evidence="3">
    <location>
        <begin position="643"/>
        <end position="669"/>
    </location>
</feature>
<feature type="compositionally biased region" description="Polar residues" evidence="3">
    <location>
        <begin position="568"/>
        <end position="577"/>
    </location>
</feature>
<feature type="compositionally biased region" description="Polar residues" evidence="3">
    <location>
        <begin position="584"/>
        <end position="598"/>
    </location>
</feature>
<feature type="site" description="Arginine finger; crucial for GTP hydrolysis by stabilizing the transition state" evidence="1">
    <location>
        <position position="182"/>
    </location>
</feature>
<feature type="splice variant" id="VSP_032369" description="In isoform b." evidence="5">
    <location>
        <begin position="1"/>
        <end position="999"/>
    </location>
</feature>
<feature type="mutagenesis site" description="In ar483; shows endocytic defects." evidence="4">
    <original>V</original>
    <variation>D</variation>
    <location>
        <position position="65"/>
    </location>
</feature>
<feature type="mutagenesis site" description="In ar507; shows endocytic defects." evidence="4">
    <original>C</original>
    <variation>Y</variation>
    <location>
        <position position="1017"/>
    </location>
</feature>
<feature type="mutagenesis site" description="In b1015; shows endocytic defects." evidence="4">
    <original>W</original>
    <variation>R</variation>
    <location>
        <position position="1079"/>
    </location>
</feature>
<evidence type="ECO:0000255" key="1">
    <source>
        <dbReference type="PROSITE-ProRule" id="PRU00167"/>
    </source>
</evidence>
<evidence type="ECO:0000255" key="2">
    <source>
        <dbReference type="PROSITE-ProRule" id="PRU00550"/>
    </source>
</evidence>
<evidence type="ECO:0000256" key="3">
    <source>
        <dbReference type="SAM" id="MobiDB-lite"/>
    </source>
</evidence>
<evidence type="ECO:0000269" key="4">
    <source>
    </source>
</evidence>
<evidence type="ECO:0000305" key="5"/>
<reference key="1">
    <citation type="journal article" date="2005" name="Nat. Cell Biol.">
        <title>Caenorhabditis elegans RME-6 is a novel regulator of RAB-5 at the clathrin-coated pit.</title>
        <authorList>
            <person name="Sato M."/>
            <person name="Sato K."/>
            <person name="Fonarev P."/>
            <person name="Huang C.-J."/>
            <person name="Liou W."/>
            <person name="Grant B.D."/>
        </authorList>
    </citation>
    <scope>NUCLEOTIDE SEQUENCE [MRNA] (ISOFORM A)</scope>
    <scope>FUNCTION</scope>
    <scope>SUBCELLULAR LOCATION</scope>
    <scope>INTERACTION WITH RAB5 AND ALPHA-ADAPTIN</scope>
    <scope>MUTAGENESIS OF VAL-65; CYS-1017 AND TRP-1079</scope>
</reference>
<reference key="2">
    <citation type="journal article" date="1998" name="Science">
        <title>Genome sequence of the nematode C. elegans: a platform for investigating biology.</title>
        <authorList>
            <consortium name="The C. elegans sequencing consortium"/>
        </authorList>
    </citation>
    <scope>NUCLEOTIDE SEQUENCE [LARGE SCALE GENOMIC DNA]</scope>
    <scope>ALTERNATIVE SPLICING</scope>
    <source>
        <strain>Bristol N2</strain>
    </source>
</reference>
<gene>
    <name type="primary">rme-6</name>
    <name type="ORF">F49E7.1</name>
</gene>
<comment type="function">
    <text evidence="4">Acts both as a GTPase-activating protein (GAP) and a guanine nucleotide exchange factor (GEF), and participates in endocytosis. Acts by regulating the activation of rab-5 by exchanging bound GDP for free GTP at clathrin coated pits.</text>
</comment>
<comment type="subunit">
    <text evidence="4">Interacts with GDP-bound rab-5. Interacts with alpha-adaptin.</text>
</comment>
<comment type="interaction">
    <interactant intactId="EBI-320814">
        <id>Q9GYH7</id>
    </interactant>
    <interactant intactId="EBI-5323248">
        <id>Q22601</id>
        <label>apa-2</label>
    </interactant>
    <organismsDiffer>false</organismsDiffer>
    <experiments>3</experiments>
</comment>
<comment type="interaction">
    <interactant intactId="EBI-320814">
        <id>Q9GYH7</id>
    </interactant>
    <interactant intactId="EBI-2655330">
        <id>P91857</id>
        <label>rab-5</label>
    </interactant>
    <organismsDiffer>false</organismsDiffer>
    <experiments>2</experiments>
</comment>
<comment type="subcellular location">
    <subcellularLocation>
        <location evidence="4">Membrane</location>
        <topology evidence="4">Peripheral membrane protein</topology>
    </subcellularLocation>
    <subcellularLocation>
        <location evidence="4">Cytoplasmic vesicle</location>
        <location evidence="4">Clathrin-coated vesicle</location>
    </subcellularLocation>
</comment>
<comment type="alternative products">
    <event type="alternative splicing"/>
    <isoform>
        <id>Q9GYH7-1</id>
        <name>a</name>
        <sequence type="displayed"/>
    </isoform>
    <isoform>
        <id>Q9GYH7-2</id>
        <name>b</name>
        <sequence type="described" ref="VSP_032369"/>
    </isoform>
</comment>
<comment type="similarity">
    <text evidence="5">Belongs to the GAPVD1 family.</text>
</comment>
<accession>Q9GYH7</accession>
<accession>Q4VQC9</accession>
<accession>Q8MNR6</accession>
<sequence length="1093" mass="124005">MADIIERIRSQDEYREFYELATKIRNQKLLTDAELHSLNRHQQEVSDNEIKLLTEAWRSSYWNNVGRQLKNQALEPTIACRLLKEISETEALPAYKHVGHHFSTLDQLLTILYNEPQSVAELLNSIDRNDITSNDSTIQVLFHLVYSCALYPEDELKIAQVVCNLLKLQLYRSGSEMRTILRKETSISTRFYKHFVELIHPTMVYLTKALRKGVLDVIQLGSFWLDIDAKQSTARFLRDNKQNEDRLPEYRALVVSKLVDFVDTFLENISKALPMLPPNLNWIIRDIFCSLYEVVDDVSAIELSHACKDMIVSNLICPAIISPQKFGVVDNDVRVGTIVNHNLVQIAMIIQMISLREFESPPEEYKEFLSQCRNTHLISEMMDALLVEKLAPDVEITSLIANGTAESDMATKSSFVGTVADVNVLIKIIRNAPSTSDAKLSRILSVCDKLPATISSTTQKSHFDNLEASPKISTLRNIHRKVQHSFKRTGDSFNDINELGAKQGEALAFGKENFDLFYLEYSPKNYKDVAEADRLKKKAEERRQLADLEKLLEPTPAPKETPVENNLIDFSSGSAETNSEHLSDSTSVSPEPLTSTEELQIGDQGVGGEQRGKLAKLKSLSDRMKKGITQSNTLSDIREHLRRSGSFVKPPPSGIPTSSSEQNLPDVATGPRDDILAKYASISSIKEQKPALGNLIDGTASASSTPRKEPLEPYYSSENLVGCRAFQDTLRKMITVLGNISYLPRIGYRNETKQNEWDKKVLLGRFLDGVLVETEHRREYGLAAQLREVKRCIELFEHAGVEILMDHLKLNEAEQDKIVNGMREERASLMRKSNDISSLEQRVLLNRRLTEQILVDFLMRTFLETGFNNKHTVGKTQEVTAVLKFYDEFKYLRAQDERAEFLKNLLTFLRDRLMQNVDWNFATDTMMSRAMTTIERYVIFAVYDNAFYPNRDADHHRDKLLRGTIAKVSDVVTPVNDFLKIPEHLHGEAPWPSAQAELSMLDIYVTAQDKLNCVVRCCDVINNLVALSSKNAVASADDLTPVLVFVIIKANPRALLSNVQFVETFAGDRIESGRDAYYWVNFKSAVEYIKTIL</sequence>
<organism>
    <name type="scientific">Caenorhabditis elegans</name>
    <dbReference type="NCBI Taxonomy" id="6239"/>
    <lineage>
        <taxon>Eukaryota</taxon>
        <taxon>Metazoa</taxon>
        <taxon>Ecdysozoa</taxon>
        <taxon>Nematoda</taxon>
        <taxon>Chromadorea</taxon>
        <taxon>Rhabditida</taxon>
        <taxon>Rhabditina</taxon>
        <taxon>Rhabditomorpha</taxon>
        <taxon>Rhabditoidea</taxon>
        <taxon>Rhabditidae</taxon>
        <taxon>Peloderinae</taxon>
        <taxon>Caenorhabditis</taxon>
    </lineage>
</organism>
<name>RME6_CAEEL</name>
<keyword id="KW-0025">Alternative splicing</keyword>
<keyword id="KW-0968">Cytoplasmic vesicle</keyword>
<keyword id="KW-0254">Endocytosis</keyword>
<keyword id="KW-0343">GTPase activation</keyword>
<keyword id="KW-0344">Guanine-nucleotide releasing factor</keyword>
<keyword id="KW-0472">Membrane</keyword>
<keyword id="KW-1185">Reference proteome</keyword>
<dbReference type="EMBL" id="AY750054">
    <property type="protein sequence ID" value="AAW73253.1"/>
    <property type="molecule type" value="mRNA"/>
</dbReference>
<dbReference type="EMBL" id="FO080361">
    <property type="protein sequence ID" value="CCD63167.1"/>
    <property type="molecule type" value="Genomic_DNA"/>
</dbReference>
<dbReference type="EMBL" id="FO080361">
    <property type="protein sequence ID" value="CCD63168.1"/>
    <property type="molecule type" value="Genomic_DNA"/>
</dbReference>
<dbReference type="PIR" id="T25788">
    <property type="entry name" value="T25788"/>
</dbReference>
<dbReference type="PIR" id="T31057">
    <property type="entry name" value="T31057"/>
</dbReference>
<dbReference type="RefSeq" id="NP_001294826.1">
    <property type="nucleotide sequence ID" value="NM_001307897.1"/>
</dbReference>
<dbReference type="RefSeq" id="NP_001379623.1">
    <molecule id="Q9GYH7-2"/>
    <property type="nucleotide sequence ID" value="NM_001392724.1"/>
</dbReference>
<dbReference type="RefSeq" id="NP_508208.2">
    <molecule id="Q9GYH7-1"/>
    <property type="nucleotide sequence ID" value="NM_075807.6"/>
</dbReference>
<dbReference type="SMR" id="Q9GYH7"/>
<dbReference type="BioGRID" id="45416">
    <property type="interactions" value="4"/>
</dbReference>
<dbReference type="DIP" id="DIP-25631N"/>
<dbReference type="FunCoup" id="Q9GYH7">
    <property type="interactions" value="3440"/>
</dbReference>
<dbReference type="IntAct" id="Q9GYH7">
    <property type="interactions" value="2"/>
</dbReference>
<dbReference type="STRING" id="6239.F49E7.1a.1"/>
<dbReference type="PaxDb" id="6239-F49E7.1a"/>
<dbReference type="PeptideAtlas" id="Q9GYH7"/>
<dbReference type="EnsemblMetazoa" id="F49E7.1a.1">
    <molecule id="Q9GYH7-1"/>
    <property type="protein sequence ID" value="F49E7.1a.1"/>
    <property type="gene ID" value="WBGene00004377"/>
</dbReference>
<dbReference type="EnsemblMetazoa" id="F49E7.1b.1">
    <molecule id="Q9GYH7-2"/>
    <property type="protein sequence ID" value="F49E7.1b.1"/>
    <property type="gene ID" value="WBGene00004377"/>
</dbReference>
<dbReference type="EnsemblMetazoa" id="F49E7.1b.2">
    <molecule id="Q9GYH7-2"/>
    <property type="protein sequence ID" value="F49E7.1b.2"/>
    <property type="gene ID" value="WBGene00004377"/>
</dbReference>
<dbReference type="EnsemblMetazoa" id="F49E7.1b.3">
    <molecule id="Q9GYH7-2"/>
    <property type="protein sequence ID" value="F49E7.1b.3"/>
    <property type="gene ID" value="WBGene00004377"/>
</dbReference>
<dbReference type="GeneID" id="180463"/>
<dbReference type="KEGG" id="cel:CELE_F49E7.1"/>
<dbReference type="UCSC" id="F49E7.1a">
    <molecule id="Q9GYH7-1"/>
    <property type="organism name" value="c. elegans"/>
</dbReference>
<dbReference type="AGR" id="WB:WBGene00004377"/>
<dbReference type="CTD" id="180463"/>
<dbReference type="WormBase" id="F49E7.1a">
    <molecule id="Q9GYH7-1"/>
    <property type="protein sequence ID" value="CE38712"/>
    <property type="gene ID" value="WBGene00004377"/>
    <property type="gene designation" value="rme-6"/>
</dbReference>
<dbReference type="WormBase" id="F49E7.1b">
    <molecule id="Q9GYH7-2"/>
    <property type="protein sequence ID" value="CE26468"/>
    <property type="gene ID" value="WBGene00004377"/>
    <property type="gene designation" value="rme-6"/>
</dbReference>
<dbReference type="eggNOG" id="KOG2319">
    <property type="taxonomic scope" value="Eukaryota"/>
</dbReference>
<dbReference type="GeneTree" id="ENSGT00940000156611"/>
<dbReference type="HOGENOM" id="CLU_012490_0_0_1"/>
<dbReference type="InParanoid" id="Q9GYH7"/>
<dbReference type="OMA" id="ELSHACK"/>
<dbReference type="OrthoDB" id="10264848at2759"/>
<dbReference type="PhylomeDB" id="Q9GYH7"/>
<dbReference type="Reactome" id="R-CEL-8856828">
    <property type="pathway name" value="Clathrin-mediated endocytosis"/>
</dbReference>
<dbReference type="Reactome" id="R-CEL-8876198">
    <property type="pathway name" value="RAB GEFs exchange GTP for GDP on RABs"/>
</dbReference>
<dbReference type="PRO" id="PR:Q9GYH7"/>
<dbReference type="Proteomes" id="UP000001940">
    <property type="component" value="Chromosome X"/>
</dbReference>
<dbReference type="Bgee" id="WBGene00004377">
    <property type="expression patterns" value="Expressed in pharyngeal muscle cell (C elegans) and 4 other cell types or tissues"/>
</dbReference>
<dbReference type="GO" id="GO:0045334">
    <property type="term" value="C:clathrin-coated endocytic vesicle"/>
    <property type="evidence" value="ECO:0000314"/>
    <property type="project" value="WormBase"/>
</dbReference>
<dbReference type="GO" id="GO:0005829">
    <property type="term" value="C:cytosol"/>
    <property type="evidence" value="ECO:0000250"/>
    <property type="project" value="UniProtKB"/>
</dbReference>
<dbReference type="GO" id="GO:0005769">
    <property type="term" value="C:early endosome"/>
    <property type="evidence" value="ECO:0000314"/>
    <property type="project" value="WormBase"/>
</dbReference>
<dbReference type="GO" id="GO:0030139">
    <property type="term" value="C:endocytic vesicle"/>
    <property type="evidence" value="ECO:0000318"/>
    <property type="project" value="GO_Central"/>
</dbReference>
<dbReference type="GO" id="GO:0005886">
    <property type="term" value="C:plasma membrane"/>
    <property type="evidence" value="ECO:0000314"/>
    <property type="project" value="WormBase"/>
</dbReference>
<dbReference type="GO" id="GO:0032794">
    <property type="term" value="F:GTPase activating protein binding"/>
    <property type="evidence" value="ECO:0000250"/>
    <property type="project" value="UniProtKB"/>
</dbReference>
<dbReference type="GO" id="GO:0005096">
    <property type="term" value="F:GTPase activator activity"/>
    <property type="evidence" value="ECO:0007669"/>
    <property type="project" value="UniProtKB-KW"/>
</dbReference>
<dbReference type="GO" id="GO:0005085">
    <property type="term" value="F:guanyl-nucleotide exchange factor activity"/>
    <property type="evidence" value="ECO:0000250"/>
    <property type="project" value="UniProtKB"/>
</dbReference>
<dbReference type="GO" id="GO:0031267">
    <property type="term" value="F:small GTPase binding"/>
    <property type="evidence" value="ECO:0000353"/>
    <property type="project" value="WormBase"/>
</dbReference>
<dbReference type="GO" id="GO:0006897">
    <property type="term" value="P:endocytosis"/>
    <property type="evidence" value="ECO:0000315"/>
    <property type="project" value="WormBase"/>
</dbReference>
<dbReference type="GO" id="GO:0018996">
    <property type="term" value="P:molting cycle, collagen and cuticulin-based cuticle"/>
    <property type="evidence" value="ECO:0000316"/>
    <property type="project" value="WormBase"/>
</dbReference>
<dbReference type="GO" id="GO:2000369">
    <property type="term" value="P:regulation of clathrin-dependent endocytosis"/>
    <property type="evidence" value="ECO:0000315"/>
    <property type="project" value="WormBase"/>
</dbReference>
<dbReference type="GO" id="GO:0051223">
    <property type="term" value="P:regulation of protein transport"/>
    <property type="evidence" value="ECO:0000250"/>
    <property type="project" value="UniProtKB"/>
</dbReference>
<dbReference type="CDD" id="cd05129">
    <property type="entry name" value="RasGAP_RAP6"/>
    <property type="match status" value="1"/>
</dbReference>
<dbReference type="FunFam" id="1.20.1050.80:FF:000001">
    <property type="entry name" value="GTPase-activating protein and VPS9 domain-containing protein 1 isoform X1"/>
    <property type="match status" value="1"/>
</dbReference>
<dbReference type="Gene3D" id="1.10.506.10">
    <property type="entry name" value="GTPase Activation - p120gap, domain 1"/>
    <property type="match status" value="1"/>
</dbReference>
<dbReference type="Gene3D" id="1.20.1050.80">
    <property type="entry name" value="VPS9 domain"/>
    <property type="match status" value="1"/>
</dbReference>
<dbReference type="InterPro" id="IPR001936">
    <property type="entry name" value="RasGAP_dom"/>
</dbReference>
<dbReference type="InterPro" id="IPR008936">
    <property type="entry name" value="Rho_GTPase_activation_prot"/>
</dbReference>
<dbReference type="InterPro" id="IPR003123">
    <property type="entry name" value="VPS9"/>
</dbReference>
<dbReference type="InterPro" id="IPR045046">
    <property type="entry name" value="Vps9-like"/>
</dbReference>
<dbReference type="InterPro" id="IPR037191">
    <property type="entry name" value="VPS9_dom_sf"/>
</dbReference>
<dbReference type="PANTHER" id="PTHR23101:SF25">
    <property type="entry name" value="GTPASE-ACTIVATING PROTEIN AND VPS9 DOMAIN-CONTAINING PROTEIN 1"/>
    <property type="match status" value="1"/>
</dbReference>
<dbReference type="PANTHER" id="PTHR23101">
    <property type="entry name" value="RAB GDP/GTP EXCHANGE FACTOR"/>
    <property type="match status" value="1"/>
</dbReference>
<dbReference type="Pfam" id="PF00616">
    <property type="entry name" value="RasGAP"/>
    <property type="match status" value="1"/>
</dbReference>
<dbReference type="Pfam" id="PF02204">
    <property type="entry name" value="VPS9"/>
    <property type="match status" value="1"/>
</dbReference>
<dbReference type="SMART" id="SM00167">
    <property type="entry name" value="VPS9"/>
    <property type="match status" value="1"/>
</dbReference>
<dbReference type="SUPFAM" id="SSF48350">
    <property type="entry name" value="GTPase activation domain, GAP"/>
    <property type="match status" value="1"/>
</dbReference>
<dbReference type="SUPFAM" id="SSF109993">
    <property type="entry name" value="VPS9 domain"/>
    <property type="match status" value="1"/>
</dbReference>
<dbReference type="PROSITE" id="PS50018">
    <property type="entry name" value="RAS_GTPASE_ACTIV_2"/>
    <property type="match status" value="1"/>
</dbReference>
<dbReference type="PROSITE" id="PS51205">
    <property type="entry name" value="VPS9"/>
    <property type="match status" value="1"/>
</dbReference>
<proteinExistence type="evidence at protein level"/>
<protein>
    <recommendedName>
        <fullName>Receptor-mediated endocytosis protein 6</fullName>
    </recommendedName>
</protein>